<reference key="1">
    <citation type="journal article" date="2000" name="DNA Res.">
        <title>Sequence-based structural features between Kvlqt1 and Tapa1 on mouse chromosome 7F4/F5 corresponding to the Beckwith-Wiedemann syndrome region on human 11p15.5: long-stretches of unusually well conserved intronic sequences of kvlqt1 between mouse and human.</title>
        <authorList>
            <person name="Yatsuki H."/>
            <person name="Watanabe H."/>
            <person name="Hattori M."/>
            <person name="Joh K."/>
            <person name="Soejima H."/>
            <person name="Komoda H."/>
            <person name="Xin Z."/>
            <person name="Zhu X."/>
            <person name="Higashimoto K."/>
            <person name="Nishimura M."/>
            <person name="Kuratomi S."/>
            <person name="Sasaki H."/>
            <person name="Sakaki Y."/>
            <person name="Mukai T."/>
        </authorList>
    </citation>
    <scope>NUCLEOTIDE SEQUENCE [MRNA] (ISOFORM 1)</scope>
</reference>
<reference key="2">
    <citation type="journal article" date="2000" name="Hum. Mol. Genet.">
        <title>Sequence conservation and variability of imprinting in the Beckwith-Wiedemann syndrome gene cluster in human and mouse.</title>
        <authorList>
            <person name="Paulsen M."/>
            <person name="El-Maarri O."/>
            <person name="Engemann S."/>
            <person name="Stroedicke M."/>
            <person name="Franck O."/>
            <person name="Davies K."/>
            <person name="Reinhardt R."/>
            <person name="Reik W."/>
            <person name="Walter J."/>
        </authorList>
    </citation>
    <scope>NUCLEOTIDE SEQUENCE [GENOMIC DNA / MRNA] (ISOFORMS 1 AND 2)</scope>
    <scope>TISSUE SPECIFICITY</scope>
    <scope>DEVELOPMENTAL STAGE</scope>
    <source>
        <strain>129/Sv</strain>
        <strain>C57BL/6J</strain>
    </source>
</reference>
<reference key="3">
    <citation type="submission" date="2000-04" db="EMBL/GenBank/DDBJ databases">
        <title>Isolation of full-length cDNA clones from mouse brain cDNA library made by oligo-capping method.</title>
        <authorList>
            <person name="Osada N."/>
            <person name="Kusuda J."/>
            <person name="Tanuma R."/>
            <person name="Ito A."/>
            <person name="Hirata M."/>
            <person name="Sugano S."/>
            <person name="Hashimoto K."/>
        </authorList>
    </citation>
    <scope>NUCLEOTIDE SEQUENCE [LARGE SCALE MRNA] (ISOFORM 1)</scope>
    <source>
        <strain>C57BL/6J</strain>
        <tissue>Brain</tissue>
    </source>
</reference>
<reference key="4">
    <citation type="journal article" date="2010" name="Cell">
        <title>A tissue-specific atlas of mouse protein phosphorylation and expression.</title>
        <authorList>
            <person name="Huttlin E.L."/>
            <person name="Jedrychowski M.P."/>
            <person name="Elias J.E."/>
            <person name="Goswami T."/>
            <person name="Rad R."/>
            <person name="Beausoleil S.A."/>
            <person name="Villen J."/>
            <person name="Haas W."/>
            <person name="Sowa M.E."/>
            <person name="Gygi S.P."/>
        </authorList>
    </citation>
    <scope>PHOSPHORYLATION [LARGE SCALE ANALYSIS] AT SER-57; SER-64; SER-92 AND THR-124</scope>
    <scope>IDENTIFICATION BY MASS SPECTROMETRY [LARGE SCALE ANALYSIS]</scope>
    <source>
        <tissue>Brain</tissue>
        <tissue>Brown adipose tissue</tissue>
        <tissue>Kidney</tissue>
        <tissue>Lung</tissue>
        <tissue>Pancreas</tissue>
        <tissue>Spleen</tissue>
        <tissue>Testis</tissue>
    </source>
</reference>
<feature type="chain" id="PRO_0000076361" description="U5 small nuclear ribonucleoprotein TSSC4">
    <location>
        <begin position="1"/>
        <end position="317"/>
    </location>
</feature>
<feature type="region of interest" description="Disordered" evidence="2">
    <location>
        <begin position="1"/>
        <end position="74"/>
    </location>
</feature>
<feature type="region of interest" description="Hom2; mediates interaction with the U5 snRNP complexes and required for spliceosomal tri-snRNP complex assembly" evidence="1">
    <location>
        <begin position="74"/>
        <end position="101"/>
    </location>
</feature>
<feature type="region of interest" description="Disordered" evidence="2">
    <location>
        <begin position="101"/>
        <end position="152"/>
    </location>
</feature>
<feature type="region of interest" description="Interaction with SNRNP200" evidence="1">
    <location>
        <begin position="146"/>
        <end position="300"/>
    </location>
</feature>
<feature type="region of interest" description="Hom3; mediates interaction with the U5 snRNP complexes" evidence="1">
    <location>
        <begin position="147"/>
        <end position="183"/>
    </location>
</feature>
<feature type="region of interest" description="Hom4; necessary for interaction with the PRPF19 complex and required for spliceosomal tri-snRNP complex assembly" evidence="1">
    <location>
        <begin position="198"/>
        <end position="238"/>
    </location>
</feature>
<feature type="region of interest" description="Disordered" evidence="2">
    <location>
        <begin position="216"/>
        <end position="317"/>
    </location>
</feature>
<feature type="compositionally biased region" description="Acidic residues" evidence="2">
    <location>
        <begin position="1"/>
        <end position="19"/>
    </location>
</feature>
<feature type="compositionally biased region" description="Low complexity" evidence="2">
    <location>
        <begin position="20"/>
        <end position="37"/>
    </location>
</feature>
<feature type="compositionally biased region" description="Polar residues" evidence="2">
    <location>
        <begin position="108"/>
        <end position="117"/>
    </location>
</feature>
<feature type="compositionally biased region" description="Low complexity" evidence="2">
    <location>
        <begin position="240"/>
        <end position="250"/>
    </location>
</feature>
<feature type="modified residue" description="Phosphoserine" evidence="7">
    <location>
        <position position="57"/>
    </location>
</feature>
<feature type="modified residue" description="Phosphoserine" evidence="7">
    <location>
        <position position="64"/>
    </location>
</feature>
<feature type="modified residue" description="Phosphoserine" evidence="1">
    <location>
        <position position="83"/>
    </location>
</feature>
<feature type="modified residue" description="Phosphoserine" evidence="7">
    <location>
        <position position="92"/>
    </location>
</feature>
<feature type="modified residue" description="Phosphothreonine" evidence="7">
    <location>
        <position position="124"/>
    </location>
</feature>
<feature type="modified residue" description="N6-acetyllysine" evidence="1">
    <location>
        <position position="214"/>
    </location>
</feature>
<feature type="splice variant" id="VSP_016562" description="In isoform 2." evidence="4">
    <original>VS</original>
    <variation>AP</variation>
    <location>
        <begin position="113"/>
        <end position="114"/>
    </location>
</feature>
<feature type="splice variant" id="VSP_016563" description="In isoform 2." evidence="4">
    <location>
        <begin position="115"/>
        <end position="317"/>
    </location>
</feature>
<comment type="function">
    <text evidence="1">Protein associated with the U5 snRNP, during its maturation and its post-splicing recycling and which is required for spliceosomal tri-snRNP complex assembly in the nucleus. Has a molecular sequestering activity and transiently hinders SNRNP200 binding sites for constitutive splicing factors that intervene later during the assembly of the spliceosome and splicing. Together with its molecular sequestering activity, may also function as a molecular adapter and placeholder, coordinating the assembly of the U5 snRNP and its association with the U4/U6 di-snRNP.</text>
</comment>
<comment type="subunit">
    <text evidence="1">Interacts in a RNA-independent manner with distinct U5 snRNP-containing complexes, the mono-U5 snRNP and the post-splicing U5 snRNP-PRPF19 complex. Interacts with SNRNP200; the interaction is direct, excludes recruitment of C9ORF78 and WBP4 to SNRNP200 and negatively regulates its RNA helicase activity. Interacts with PRPF8; the interaction is direct.</text>
</comment>
<comment type="subcellular location">
    <subcellularLocation>
        <location evidence="1">Nucleus</location>
    </subcellularLocation>
    <subcellularLocation>
        <location evidence="1">Cytoplasm</location>
    </subcellularLocation>
    <text evidence="1">Shuttles between the cytoplasm and the nucleus, associated with the U5 snRNP.</text>
</comment>
<comment type="alternative products">
    <event type="alternative splicing"/>
    <isoform>
        <id>Q9JHE7-1</id>
        <name>1</name>
        <name>Tssc4-1</name>
        <sequence type="displayed"/>
    </isoform>
    <isoform>
        <id>Q9JHE7-2</id>
        <name>2</name>
        <name>Tssc4-2</name>
        <sequence type="described" ref="VSP_016562 VSP_016563"/>
    </isoform>
</comment>
<comment type="tissue specificity">
    <text evidence="3">Expressed in placenta. Widely expressed in embryo and newborn.</text>
</comment>
<comment type="developmental stage">
    <text evidence="3">Expressed in embryo at 12.5 dpc and 16.5 dpc.</text>
</comment>
<comment type="similarity">
    <text evidence="5">Belongs to the TSSC4 family.</text>
</comment>
<gene>
    <name evidence="6" type="primary">Tssc4</name>
    <name type="ORF">MNCb-3063</name>
</gene>
<dbReference type="EMBL" id="AB038011">
    <property type="protein sequence ID" value="BAA96876.1"/>
    <property type="molecule type" value="mRNA"/>
</dbReference>
<dbReference type="EMBL" id="AJ251835">
    <property type="protein sequence ID" value="CAB94775.1"/>
    <property type="molecule type" value="Genomic_DNA"/>
</dbReference>
<dbReference type="EMBL" id="AJ279796">
    <property type="protein sequence ID" value="CAB94724.1"/>
    <property type="molecule type" value="mRNA"/>
</dbReference>
<dbReference type="EMBL" id="AB041597">
    <property type="protein sequence ID" value="BAA95080.1"/>
    <property type="molecule type" value="mRNA"/>
</dbReference>
<dbReference type="CCDS" id="CCDS40195.1">
    <molecule id="Q9JHE7-1"/>
</dbReference>
<dbReference type="CCDS" id="CCDS40196.1">
    <molecule id="Q9JHE7-2"/>
</dbReference>
<dbReference type="RefSeq" id="NP_001108557.1">
    <molecule id="Q9JHE7-1"/>
    <property type="nucleotide sequence ID" value="NM_001115085.1"/>
</dbReference>
<dbReference type="RefSeq" id="NP_064681.1">
    <molecule id="Q9JHE7-1"/>
    <property type="nucleotide sequence ID" value="NM_020285.2"/>
</dbReference>
<dbReference type="RefSeq" id="NP_619537.1">
    <molecule id="Q9JHE7-2"/>
    <property type="nucleotide sequence ID" value="NM_138631.1"/>
</dbReference>
<dbReference type="RefSeq" id="XP_030098681.1">
    <molecule id="Q9JHE7-2"/>
    <property type="nucleotide sequence ID" value="XM_030242821.2"/>
</dbReference>
<dbReference type="SMR" id="Q9JHE7"/>
<dbReference type="BioGRID" id="208191">
    <property type="interactions" value="1"/>
</dbReference>
<dbReference type="FunCoup" id="Q9JHE7">
    <property type="interactions" value="1037"/>
</dbReference>
<dbReference type="IntAct" id="Q9JHE7">
    <property type="interactions" value="1"/>
</dbReference>
<dbReference type="MINT" id="Q9JHE7"/>
<dbReference type="STRING" id="10090.ENSMUSP00000056582"/>
<dbReference type="GlyGen" id="Q9JHE7">
    <property type="glycosylation" value="2 sites, 1 O-linked glycan (1 site)"/>
</dbReference>
<dbReference type="iPTMnet" id="Q9JHE7"/>
<dbReference type="PhosphoSitePlus" id="Q9JHE7"/>
<dbReference type="jPOST" id="Q9JHE7"/>
<dbReference type="PaxDb" id="10090-ENSMUSP00000056582"/>
<dbReference type="PeptideAtlas" id="Q9JHE7"/>
<dbReference type="ProteomicsDB" id="297668">
    <molecule id="Q9JHE7-1"/>
</dbReference>
<dbReference type="ProteomicsDB" id="297669">
    <molecule id="Q9JHE7-2"/>
</dbReference>
<dbReference type="Pumba" id="Q9JHE7"/>
<dbReference type="Antibodypedia" id="42107">
    <property type="antibodies" value="73 antibodies from 17 providers"/>
</dbReference>
<dbReference type="DNASU" id="56844"/>
<dbReference type="Ensembl" id="ENSMUST00000060433.10">
    <molecule id="Q9JHE7-1"/>
    <property type="protein sequence ID" value="ENSMUSP00000056582.4"/>
    <property type="gene ID" value="ENSMUSG00000045752.14"/>
</dbReference>
<dbReference type="Ensembl" id="ENSMUST00000105920.8">
    <molecule id="Q9JHE7-2"/>
    <property type="protein sequence ID" value="ENSMUSP00000101540.2"/>
    <property type="gene ID" value="ENSMUSG00000045752.14"/>
</dbReference>
<dbReference type="Ensembl" id="ENSMUST00000177841.8">
    <molecule id="Q9JHE7-1"/>
    <property type="protein sequence ID" value="ENSMUSP00000137399.2"/>
    <property type="gene ID" value="ENSMUSG00000045752.14"/>
</dbReference>
<dbReference type="Ensembl" id="ENSMUST00000208779.2">
    <molecule id="Q9JHE7-2"/>
    <property type="protein sequence ID" value="ENSMUSP00000146914.2"/>
    <property type="gene ID" value="ENSMUSG00000045752.14"/>
</dbReference>
<dbReference type="GeneID" id="56844"/>
<dbReference type="KEGG" id="mmu:56844"/>
<dbReference type="UCSC" id="uc009kow.1">
    <molecule id="Q9JHE7-1"/>
    <property type="organism name" value="mouse"/>
</dbReference>
<dbReference type="AGR" id="MGI:1861712"/>
<dbReference type="CTD" id="10078"/>
<dbReference type="MGI" id="MGI:1861712">
    <property type="gene designation" value="Tssc4"/>
</dbReference>
<dbReference type="VEuPathDB" id="HostDB:ENSMUSG00000045752"/>
<dbReference type="eggNOG" id="ENOG502S07M">
    <property type="taxonomic scope" value="Eukaryota"/>
</dbReference>
<dbReference type="GeneTree" id="ENSGT00390000011846"/>
<dbReference type="HOGENOM" id="CLU_077569_0_0_1"/>
<dbReference type="InParanoid" id="Q9JHE7"/>
<dbReference type="OMA" id="RMAAMEF"/>
<dbReference type="OrthoDB" id="1906282at2759"/>
<dbReference type="PhylomeDB" id="Q9JHE7"/>
<dbReference type="TreeFam" id="TF335741"/>
<dbReference type="BioGRID-ORCS" id="56844">
    <property type="hits" value="3 hits in 76 CRISPR screens"/>
</dbReference>
<dbReference type="ChiTaRS" id="Tssc4">
    <property type="organism name" value="mouse"/>
</dbReference>
<dbReference type="PRO" id="PR:Q9JHE7"/>
<dbReference type="Proteomes" id="UP000000589">
    <property type="component" value="Chromosome 7"/>
</dbReference>
<dbReference type="RNAct" id="Q9JHE7">
    <property type="molecule type" value="protein"/>
</dbReference>
<dbReference type="Bgee" id="ENSMUSG00000045752">
    <property type="expression patterns" value="Expressed in saccule of membranous labyrinth and 254 other cell types or tissues"/>
</dbReference>
<dbReference type="ExpressionAtlas" id="Q9JHE7">
    <property type="expression patterns" value="baseline and differential"/>
</dbReference>
<dbReference type="GO" id="GO:0005737">
    <property type="term" value="C:cytoplasm"/>
    <property type="evidence" value="ECO:0000250"/>
    <property type="project" value="UniProtKB"/>
</dbReference>
<dbReference type="GO" id="GO:0005634">
    <property type="term" value="C:nucleus"/>
    <property type="evidence" value="ECO:0000250"/>
    <property type="project" value="UniProtKB"/>
</dbReference>
<dbReference type="GO" id="GO:0005681">
    <property type="term" value="C:spliceosomal complex"/>
    <property type="evidence" value="ECO:0007669"/>
    <property type="project" value="UniProtKB-KW"/>
</dbReference>
<dbReference type="GO" id="GO:0005682">
    <property type="term" value="C:U5 snRNP"/>
    <property type="evidence" value="ECO:0000250"/>
    <property type="project" value="UniProtKB"/>
</dbReference>
<dbReference type="GO" id="GO:0140313">
    <property type="term" value="F:molecular sequestering activity"/>
    <property type="evidence" value="ECO:0000250"/>
    <property type="project" value="UniProtKB"/>
</dbReference>
<dbReference type="GO" id="GO:0044877">
    <property type="term" value="F:protein-containing complex binding"/>
    <property type="evidence" value="ECO:0007669"/>
    <property type="project" value="Ensembl"/>
</dbReference>
<dbReference type="GO" id="GO:0000387">
    <property type="term" value="P:spliceosomal snRNP assembly"/>
    <property type="evidence" value="ECO:0000250"/>
    <property type="project" value="UniProtKB"/>
</dbReference>
<dbReference type="GO" id="GO:0000244">
    <property type="term" value="P:spliceosomal tri-snRNP complex assembly"/>
    <property type="evidence" value="ECO:0000250"/>
    <property type="project" value="UniProtKB"/>
</dbReference>
<dbReference type="InterPro" id="IPR029338">
    <property type="entry name" value="TSSC4"/>
</dbReference>
<dbReference type="PANTHER" id="PTHR13445">
    <property type="entry name" value="TUMOR SUPPRESSING SUBTRANSFERABLE CANDIDATE 4 TSSC4"/>
    <property type="match status" value="1"/>
</dbReference>
<dbReference type="PANTHER" id="PTHR13445:SF3">
    <property type="entry name" value="U5 SMALL NUCLEAR RIBONUCLEOPROTEIN TSSC4"/>
    <property type="match status" value="1"/>
</dbReference>
<dbReference type="Pfam" id="PF15264">
    <property type="entry name" value="TSSC4"/>
    <property type="match status" value="1"/>
</dbReference>
<protein>
    <recommendedName>
        <fullName evidence="1">U5 small nuclear ribonucleoprotein TSSC4</fullName>
    </recommendedName>
</protein>
<name>TSSC4_MOUSE</name>
<accession>Q9JHE7</accession>
<sequence>MAETEAGLEADEPTEDDTLPSDTVSLSDSDSDLSLPSGVEVQVLSPERLSEEGQEDSGPEDPPSPPTGTLTTAVQPFHLRGMSSTFSQRSHSIFDCLESAARQAPCSAPQTSVSDNGSFRRPVTPPSQTPARGLSRVHGNTGPTRVLPVPDYVSHPERWTKYSLEDVSEASEQSNRDAALAFLSSRSQVSHTDYVPSFNQDPSSCGEGRVVFTKPVRDSEARAERKRVLKKGVGSGAGGEAAVELAHLAGPEAEEWSGHQGQPEVVVPSEAAHPESSSGPIGVKAVGFHGSKKRSRDHFRNRDGNPGGPGSERGPSV</sequence>
<evidence type="ECO:0000250" key="1">
    <source>
        <dbReference type="UniProtKB" id="Q9Y5U2"/>
    </source>
</evidence>
<evidence type="ECO:0000256" key="2">
    <source>
        <dbReference type="SAM" id="MobiDB-lite"/>
    </source>
</evidence>
<evidence type="ECO:0000269" key="3">
    <source>
    </source>
</evidence>
<evidence type="ECO:0000303" key="4">
    <source>
    </source>
</evidence>
<evidence type="ECO:0000305" key="5"/>
<evidence type="ECO:0000312" key="6">
    <source>
        <dbReference type="MGI" id="MGI:1861712"/>
    </source>
</evidence>
<evidence type="ECO:0007744" key="7">
    <source>
    </source>
</evidence>
<proteinExistence type="evidence at protein level"/>
<organism>
    <name type="scientific">Mus musculus</name>
    <name type="common">Mouse</name>
    <dbReference type="NCBI Taxonomy" id="10090"/>
    <lineage>
        <taxon>Eukaryota</taxon>
        <taxon>Metazoa</taxon>
        <taxon>Chordata</taxon>
        <taxon>Craniata</taxon>
        <taxon>Vertebrata</taxon>
        <taxon>Euteleostomi</taxon>
        <taxon>Mammalia</taxon>
        <taxon>Eutheria</taxon>
        <taxon>Euarchontoglires</taxon>
        <taxon>Glires</taxon>
        <taxon>Rodentia</taxon>
        <taxon>Myomorpha</taxon>
        <taxon>Muroidea</taxon>
        <taxon>Muridae</taxon>
        <taxon>Murinae</taxon>
        <taxon>Mus</taxon>
        <taxon>Mus</taxon>
    </lineage>
</organism>
<keyword id="KW-0007">Acetylation</keyword>
<keyword id="KW-0025">Alternative splicing</keyword>
<keyword id="KW-0963">Cytoplasm</keyword>
<keyword id="KW-0507">mRNA processing</keyword>
<keyword id="KW-0508">mRNA splicing</keyword>
<keyword id="KW-0539">Nucleus</keyword>
<keyword id="KW-0597">Phosphoprotein</keyword>
<keyword id="KW-1185">Reference proteome</keyword>
<keyword id="KW-0747">Spliceosome</keyword>